<reference key="1">
    <citation type="journal article" date="2007" name="Nat. Genet.">
        <title>Genomic analysis of Bartonella identifies type IV secretion systems as host adaptability factors.</title>
        <authorList>
            <person name="Saenz H.L."/>
            <person name="Engel P."/>
            <person name="Stoeckli M.C."/>
            <person name="Lanz C."/>
            <person name="Raddatz G."/>
            <person name="Vayssier-Taussat M."/>
            <person name="Birtles R."/>
            <person name="Schuster S.C."/>
            <person name="Dehio C."/>
        </authorList>
    </citation>
    <scope>NUCLEOTIDE SEQUENCE [LARGE SCALE GENOMIC DNA]</scope>
    <source>
        <strain>CIP 105476 / IBS 506</strain>
    </source>
</reference>
<comment type="similarity">
    <text evidence="1">Belongs to the SfsA family.</text>
</comment>
<organism>
    <name type="scientific">Bartonella tribocorum (strain CIP 105476 / IBS 506)</name>
    <dbReference type="NCBI Taxonomy" id="382640"/>
    <lineage>
        <taxon>Bacteria</taxon>
        <taxon>Pseudomonadati</taxon>
        <taxon>Pseudomonadota</taxon>
        <taxon>Alphaproteobacteria</taxon>
        <taxon>Hyphomicrobiales</taxon>
        <taxon>Bartonellaceae</taxon>
        <taxon>Bartonella</taxon>
    </lineage>
</organism>
<feature type="chain" id="PRO_1000075533" description="Sugar fermentation stimulation protein homolog">
    <location>
        <begin position="1"/>
        <end position="238"/>
    </location>
</feature>
<evidence type="ECO:0000255" key="1">
    <source>
        <dbReference type="HAMAP-Rule" id="MF_00095"/>
    </source>
</evidence>
<name>SFSA_BART1</name>
<dbReference type="EMBL" id="AM260525">
    <property type="protein sequence ID" value="CAK01527.1"/>
    <property type="molecule type" value="Genomic_DNA"/>
</dbReference>
<dbReference type="RefSeq" id="WP_012231730.1">
    <property type="nucleotide sequence ID" value="NC_010161.1"/>
</dbReference>
<dbReference type="SMR" id="A9IU91"/>
<dbReference type="KEGG" id="btr:BT_1155"/>
<dbReference type="eggNOG" id="COG1489">
    <property type="taxonomic scope" value="Bacteria"/>
</dbReference>
<dbReference type="HOGENOM" id="CLU_052299_2_0_5"/>
<dbReference type="Proteomes" id="UP000001592">
    <property type="component" value="Chromosome"/>
</dbReference>
<dbReference type="GO" id="GO:0003677">
    <property type="term" value="F:DNA binding"/>
    <property type="evidence" value="ECO:0007669"/>
    <property type="project" value="InterPro"/>
</dbReference>
<dbReference type="CDD" id="cd22359">
    <property type="entry name" value="SfsA-like_bacterial"/>
    <property type="match status" value="1"/>
</dbReference>
<dbReference type="Gene3D" id="2.40.50.580">
    <property type="match status" value="1"/>
</dbReference>
<dbReference type="Gene3D" id="3.40.1350.60">
    <property type="match status" value="1"/>
</dbReference>
<dbReference type="HAMAP" id="MF_00095">
    <property type="entry name" value="SfsA"/>
    <property type="match status" value="1"/>
</dbReference>
<dbReference type="InterPro" id="IPR005224">
    <property type="entry name" value="SfsA"/>
</dbReference>
<dbReference type="InterPro" id="IPR040452">
    <property type="entry name" value="SfsA_C"/>
</dbReference>
<dbReference type="InterPro" id="IPR041465">
    <property type="entry name" value="SfsA_N"/>
</dbReference>
<dbReference type="NCBIfam" id="TIGR00230">
    <property type="entry name" value="sfsA"/>
    <property type="match status" value="1"/>
</dbReference>
<dbReference type="PANTHER" id="PTHR30545">
    <property type="entry name" value="SUGAR FERMENTATION STIMULATION PROTEIN A"/>
    <property type="match status" value="1"/>
</dbReference>
<dbReference type="PANTHER" id="PTHR30545:SF2">
    <property type="entry name" value="SUGAR FERMENTATION STIMULATION PROTEIN A"/>
    <property type="match status" value="1"/>
</dbReference>
<dbReference type="Pfam" id="PF03749">
    <property type="entry name" value="SfsA"/>
    <property type="match status" value="1"/>
</dbReference>
<dbReference type="Pfam" id="PF17746">
    <property type="entry name" value="SfsA_N"/>
    <property type="match status" value="1"/>
</dbReference>
<proteinExistence type="inferred from homology"/>
<protein>
    <recommendedName>
        <fullName evidence="1">Sugar fermentation stimulation protein homolog</fullName>
    </recommendedName>
</protein>
<gene>
    <name evidence="1" type="primary">sfsA</name>
    <name type="ordered locus">BT_1155</name>
</gene>
<accession>A9IU91</accession>
<sequence length="238" mass="27510">MHFIPKLFPAKLIRRYKRFLADVKQDDQHIFTVSVPNTGSMLGLTASNANIWLSYHENTKRKYAYQLEIVEADNTLVGINTTLPNKLVLEAIQNGLLPELSGYKTILKEQRYGTQSRIDFLLRDDNLPDCYLEVKNVHFIRQKGLAEFPDTETKRGARHLEELMHVVQQGKRAAMLYIIQREDCTAFTICHDLDPLYGRKFDLALKSGVECYAIKCHISVEGIFPIQRVKIENRRNND</sequence>